<proteinExistence type="inferred from homology"/>
<gene>
    <name type="primary">WNT-3B</name>
</gene>
<feature type="chain" id="PRO_0000200618" description="Protein Wnt-3b">
    <location>
        <begin position="1" status="less than"/>
        <end position="123" status="greater than"/>
    </location>
</feature>
<feature type="lipid moiety-binding region" description="O-palmitoleoyl serine; by PORCN" evidence="3">
    <location>
        <position position="1"/>
    </location>
</feature>
<feature type="glycosylation site" description="N-linked (GlcNAc...) asparagine" evidence="4">
    <location>
        <position position="90"/>
    </location>
</feature>
<feature type="disulfide bond" evidence="2">
    <location>
        <begin position="89"/>
        <end position="104"/>
    </location>
</feature>
<feature type="non-terminal residue">
    <location>
        <position position="1"/>
    </location>
</feature>
<feature type="non-terminal residue">
    <location>
        <position position="123"/>
    </location>
</feature>
<name>WNT3B_ALOVU</name>
<comment type="function">
    <text>Ligand for members of the frizzled family of seven transmembrane receptors. Probable developmental protein. May be a signaling molecule which affects the development of discrete regions of tissues. Is likely to signal over only few cell diameters.</text>
</comment>
<comment type="subcellular location">
    <subcellularLocation>
        <location>Secreted</location>
        <location>Extracellular space</location>
        <location>Extracellular matrix</location>
    </subcellularLocation>
</comment>
<comment type="PTM">
    <text evidence="1 3">Palmitoleoylation is required for efficient binding to frizzled receptors. Depalmitoleoylation leads to Wnt signaling pathway inhibition.</text>
</comment>
<comment type="similarity">
    <text evidence="5">Belongs to the Wnt family.</text>
</comment>
<evidence type="ECO:0000250" key="1">
    <source>
        <dbReference type="UniProtKB" id="P27467"/>
    </source>
</evidence>
<evidence type="ECO:0000250" key="2">
    <source>
        <dbReference type="UniProtKB" id="P28026"/>
    </source>
</evidence>
<evidence type="ECO:0000250" key="3">
    <source>
        <dbReference type="UniProtKB" id="P56704"/>
    </source>
</evidence>
<evidence type="ECO:0000255" key="4"/>
<evidence type="ECO:0000305" key="5"/>
<dbReference type="EMBL" id="M91253">
    <property type="protein sequence ID" value="AAA48539.1"/>
    <property type="molecule type" value="Genomic_DNA"/>
</dbReference>
<dbReference type="SMR" id="P28102"/>
<dbReference type="GlyCosmos" id="P28102">
    <property type="glycosylation" value="1 site, No reported glycans"/>
</dbReference>
<dbReference type="GO" id="GO:0005615">
    <property type="term" value="C:extracellular space"/>
    <property type="evidence" value="ECO:0007669"/>
    <property type="project" value="TreeGrafter"/>
</dbReference>
<dbReference type="GO" id="GO:0005125">
    <property type="term" value="F:cytokine activity"/>
    <property type="evidence" value="ECO:0007669"/>
    <property type="project" value="TreeGrafter"/>
</dbReference>
<dbReference type="GO" id="GO:0005109">
    <property type="term" value="F:frizzled binding"/>
    <property type="evidence" value="ECO:0007669"/>
    <property type="project" value="TreeGrafter"/>
</dbReference>
<dbReference type="GO" id="GO:0060070">
    <property type="term" value="P:canonical Wnt signaling pathway"/>
    <property type="evidence" value="ECO:0007669"/>
    <property type="project" value="TreeGrafter"/>
</dbReference>
<dbReference type="GO" id="GO:0045165">
    <property type="term" value="P:cell fate commitment"/>
    <property type="evidence" value="ECO:0007669"/>
    <property type="project" value="TreeGrafter"/>
</dbReference>
<dbReference type="GO" id="GO:0030182">
    <property type="term" value="P:neuron differentiation"/>
    <property type="evidence" value="ECO:0007669"/>
    <property type="project" value="TreeGrafter"/>
</dbReference>
<dbReference type="FunFam" id="3.30.2460.20:FF:000009">
    <property type="entry name" value="Protein Wnt-3a"/>
    <property type="match status" value="1"/>
</dbReference>
<dbReference type="Gene3D" id="3.30.2460.20">
    <property type="match status" value="1"/>
</dbReference>
<dbReference type="InterPro" id="IPR005817">
    <property type="entry name" value="Wnt"/>
</dbReference>
<dbReference type="InterPro" id="IPR043158">
    <property type="entry name" value="Wnt_C"/>
</dbReference>
<dbReference type="PANTHER" id="PTHR12027:SF82">
    <property type="entry name" value="PROTO-ONCOGENE WNT-3"/>
    <property type="match status" value="1"/>
</dbReference>
<dbReference type="PANTHER" id="PTHR12027">
    <property type="entry name" value="WNT RELATED"/>
    <property type="match status" value="1"/>
</dbReference>
<dbReference type="Pfam" id="PF00110">
    <property type="entry name" value="wnt"/>
    <property type="match status" value="1"/>
</dbReference>
<dbReference type="SMART" id="SM00097">
    <property type="entry name" value="WNT1"/>
    <property type="match status" value="1"/>
</dbReference>
<accession>P28102</accession>
<reference key="1">
    <citation type="journal article" date="1992" name="Proc. Natl. Acad. Sci. U.S.A.">
        <title>Diversification of the Wnt gene family on the ancestral lineage of vertebrates.</title>
        <authorList>
            <person name="Sidow A."/>
        </authorList>
    </citation>
    <scope>NUCLEOTIDE SEQUENCE [GENOMIC DNA]</scope>
</reference>
<keyword id="KW-0217">Developmental protein</keyword>
<keyword id="KW-1015">Disulfide bond</keyword>
<keyword id="KW-0272">Extracellular matrix</keyword>
<keyword id="KW-0325">Glycoprotein</keyword>
<keyword id="KW-0449">Lipoprotein</keyword>
<keyword id="KW-0964">Secreted</keyword>
<keyword id="KW-0879">Wnt signaling pathway</keyword>
<organism>
    <name type="scientific">Alopias vulpinus</name>
    <name type="common">Common thresher shark</name>
    <name type="synonym">Squalus vulpinus</name>
    <dbReference type="NCBI Taxonomy" id="7852"/>
    <lineage>
        <taxon>Eukaryota</taxon>
        <taxon>Metazoa</taxon>
        <taxon>Chordata</taxon>
        <taxon>Craniata</taxon>
        <taxon>Vertebrata</taxon>
        <taxon>Chondrichthyes</taxon>
        <taxon>Elasmobranchii</taxon>
        <taxon>Galeomorphii</taxon>
        <taxon>Galeoidea</taxon>
        <taxon>Lamniformes</taxon>
        <taxon>Alopiidae</taxon>
        <taxon>Alopias</taxon>
    </lineage>
</organism>
<sequence length="123" mass="14235">SGSCEVKTCWWAQPDFRVIGDYLKDKYDSASEMVVEKHRESRGWVETLRAKYELFKPPTERDLVYYENSPNFCEPNAETGSFGTRDRICNVTSHGIDGCDLLCCGRGHNTRTEKRKEKCHCIF</sequence>
<protein>
    <recommendedName>
        <fullName>Protein Wnt-3b</fullName>
    </recommendedName>
</protein>